<reference key="1">
    <citation type="journal article" date="1998" name="Science">
        <title>Complete genome sequence of Treponema pallidum, the syphilis spirochete.</title>
        <authorList>
            <person name="Fraser C.M."/>
            <person name="Norris S.J."/>
            <person name="Weinstock G.M."/>
            <person name="White O."/>
            <person name="Sutton G.G."/>
            <person name="Dodson R.J."/>
            <person name="Gwinn M.L."/>
            <person name="Hickey E.K."/>
            <person name="Clayton R.A."/>
            <person name="Ketchum K.A."/>
            <person name="Sodergren E."/>
            <person name="Hardham J.M."/>
            <person name="McLeod M.P."/>
            <person name="Salzberg S.L."/>
            <person name="Peterson J.D."/>
            <person name="Khalak H.G."/>
            <person name="Richardson D.L."/>
            <person name="Howell J.K."/>
            <person name="Chidambaram M."/>
            <person name="Utterback T.R."/>
            <person name="McDonald L.A."/>
            <person name="Artiach P."/>
            <person name="Bowman C."/>
            <person name="Cotton M.D."/>
            <person name="Fujii C."/>
            <person name="Garland S.A."/>
            <person name="Hatch B."/>
            <person name="Horst K."/>
            <person name="Roberts K.M."/>
            <person name="Sandusky M."/>
            <person name="Weidman J.F."/>
            <person name="Smith H.O."/>
            <person name="Venter J.C."/>
        </authorList>
    </citation>
    <scope>NUCLEOTIDE SEQUENCE [LARGE SCALE GENOMIC DNA]</scope>
    <source>
        <strain>Nichols</strain>
    </source>
</reference>
<feature type="chain" id="PRO_0000202344" description="Uncharacterized protein TP_0873">
    <location>
        <begin position="1"/>
        <end position="200"/>
    </location>
</feature>
<organism>
    <name type="scientific">Treponema pallidum (strain Nichols)</name>
    <dbReference type="NCBI Taxonomy" id="243276"/>
    <lineage>
        <taxon>Bacteria</taxon>
        <taxon>Pseudomonadati</taxon>
        <taxon>Spirochaetota</taxon>
        <taxon>Spirochaetia</taxon>
        <taxon>Spirochaetales</taxon>
        <taxon>Treponemataceae</taxon>
        <taxon>Treponema</taxon>
    </lineage>
</organism>
<proteinExistence type="predicted"/>
<dbReference type="EMBL" id="AE000520">
    <property type="protein sequence ID" value="AAC65847.1"/>
    <property type="molecule type" value="Genomic_DNA"/>
</dbReference>
<dbReference type="PIR" id="G71270">
    <property type="entry name" value="G71270"/>
</dbReference>
<dbReference type="RefSeq" id="WP_010882316.1">
    <property type="nucleotide sequence ID" value="NC_021490.2"/>
</dbReference>
<dbReference type="SMR" id="O83843"/>
<dbReference type="IntAct" id="O83843">
    <property type="interactions" value="11"/>
</dbReference>
<dbReference type="STRING" id="243276.TP_0873"/>
<dbReference type="EnsemblBacteria" id="AAC65847">
    <property type="protein sequence ID" value="AAC65847"/>
    <property type="gene ID" value="TP_0873"/>
</dbReference>
<dbReference type="KEGG" id="tpa:TP_0873"/>
<dbReference type="KEGG" id="tpw:TPANIC_0873"/>
<dbReference type="eggNOG" id="ENOG5033BU4">
    <property type="taxonomic scope" value="Bacteria"/>
</dbReference>
<dbReference type="HOGENOM" id="CLU_1383650_0_0_12"/>
<dbReference type="OrthoDB" id="367580at2"/>
<dbReference type="Proteomes" id="UP000000811">
    <property type="component" value="Chromosome"/>
</dbReference>
<sequence length="200" mass="21702">MDITINGHTLQYVIEHEKTIGEVLGAIEAACKKEKQTVSAVTVNGRELSANELDTLFCQSLDTDVTLNLTTLSGGDVRALLREISTTLLARTAALQEIAVNMHSGNLAESYAMVSDFSALLKSLYHCFTLSDIADLDHGLRIKGKALHDYQREISPLLKGLLEAMEEGDSVAVGDIAEYELAPVVRDLSDGILHMDMGVQ</sequence>
<keyword id="KW-1185">Reference proteome</keyword>
<protein>
    <recommendedName>
        <fullName>Uncharacterized protein TP_0873</fullName>
    </recommendedName>
</protein>
<accession>O83843</accession>
<name>Y873_TREPA</name>
<gene>
    <name type="ordered locus">TP_0873</name>
</gene>